<evidence type="ECO:0000250" key="1"/>
<evidence type="ECO:0000250" key="2">
    <source>
        <dbReference type="UniProtKB" id="Q7XI96"/>
    </source>
</evidence>
<evidence type="ECO:0000256" key="3">
    <source>
        <dbReference type="SAM" id="MobiDB-lite"/>
    </source>
</evidence>
<evidence type="ECO:0000269" key="4">
    <source>
    </source>
</evidence>
<evidence type="ECO:0000303" key="5">
    <source>
    </source>
</evidence>
<evidence type="ECO:0000305" key="6"/>
<evidence type="ECO:0000312" key="7">
    <source>
        <dbReference type="EMBL" id="BAB33003.1"/>
    </source>
</evidence>
<evidence type="ECO:0000312" key="8">
    <source>
        <dbReference type="EMBL" id="BAS70923.1"/>
    </source>
</evidence>
<gene>
    <name evidence="5" type="primary">BZR2</name>
    <name evidence="8" type="ordered locus">Os01g0203000</name>
    <name evidence="6" type="ordered locus">LOC_Os01g10610</name>
    <name evidence="7" type="ORF">P0489A05.32</name>
</gene>
<keyword id="KW-1070">Brassinosteroid signaling pathway</keyword>
<keyword id="KW-0238">DNA-binding</keyword>
<keyword id="KW-0341">Growth regulation</keyword>
<keyword id="KW-1185">Reference proteome</keyword>
<keyword id="KW-0804">Transcription</keyword>
<keyword id="KW-0805">Transcription regulation</keyword>
<sequence>MATGGGGGGGGMGGGGVGGGAGAAGVGVGGRMPTWRERENNKRRERRRRAIAAKIFAGLRAHGGYKLPKHCDNNEVLKALCNEAGWVVEPDGTTYRKGYKPPERMEVIGCSVSPSPCSSYQPSPRASYNASPTSSSFPSGASSPFLPHPNNMANGVDGNPILPWLKTLSNSPSSKKHPQLPPLLIHGGSISAPVTPPLSSPTARTPRMKTDWDESNVQPTWTGSNSPCVVNSTPPSPGRTMLPDPAWLAGIQISSTSPSSPTFSLVSSNPFSVFKDAILVGNNSSRMCTPGQSGTCSPAIPGMAPHPDIHMMDAVSDEFAFGSSTNGGHQAAGLVRAWEGERIHEDSGSDDLELTLGSSRTRAAA</sequence>
<feature type="chain" id="PRO_0000429110" description="Protein BZR1 homolog 2">
    <location>
        <begin position="1"/>
        <end position="365"/>
    </location>
</feature>
<feature type="region of interest" description="Disordered" evidence="3">
    <location>
        <begin position="1"/>
        <end position="45"/>
    </location>
</feature>
<feature type="region of interest" description="Required for DNA-binding" evidence="1">
    <location>
        <begin position="31"/>
        <end position="113"/>
    </location>
</feature>
<feature type="region of interest" description="Disordered" evidence="3">
    <location>
        <begin position="113"/>
        <end position="154"/>
    </location>
</feature>
<feature type="region of interest" description="Disordered" evidence="3">
    <location>
        <begin position="191"/>
        <end position="236"/>
    </location>
</feature>
<feature type="region of interest" description="Disordered" evidence="3">
    <location>
        <begin position="344"/>
        <end position="365"/>
    </location>
</feature>
<feature type="compositionally biased region" description="Gly residues" evidence="3">
    <location>
        <begin position="1"/>
        <end position="30"/>
    </location>
</feature>
<feature type="compositionally biased region" description="Low complexity" evidence="3">
    <location>
        <begin position="113"/>
        <end position="144"/>
    </location>
</feature>
<feature type="compositionally biased region" description="Polar residues" evidence="3">
    <location>
        <begin position="215"/>
        <end position="233"/>
    </location>
</feature>
<feature type="compositionally biased region" description="Polar residues" evidence="3">
    <location>
        <begin position="356"/>
        <end position="365"/>
    </location>
</feature>
<organism>
    <name type="scientific">Oryza sativa subsp. japonica</name>
    <name type="common">Rice</name>
    <dbReference type="NCBI Taxonomy" id="39947"/>
    <lineage>
        <taxon>Eukaryota</taxon>
        <taxon>Viridiplantae</taxon>
        <taxon>Streptophyta</taxon>
        <taxon>Embryophyta</taxon>
        <taxon>Tracheophyta</taxon>
        <taxon>Spermatophyta</taxon>
        <taxon>Magnoliopsida</taxon>
        <taxon>Liliopsida</taxon>
        <taxon>Poales</taxon>
        <taxon>Poaceae</taxon>
        <taxon>BOP clade</taxon>
        <taxon>Oryzoideae</taxon>
        <taxon>Oryzeae</taxon>
        <taxon>Oryzinae</taxon>
        <taxon>Oryza</taxon>
        <taxon>Oryza sativa</taxon>
    </lineage>
</organism>
<accession>Q0JPT4</accession>
<accession>A0A0P0UZJ2</accession>
<accession>Q9AWH4</accession>
<proteinExistence type="evidence at protein level"/>
<comment type="function">
    <text evidence="2">May function in brassinosteroid signaling.</text>
</comment>
<comment type="subunit">
    <text evidence="4">Interacts with PUB24.</text>
</comment>
<comment type="similarity">
    <text evidence="6">Belongs to the BZR/LAT61 family.</text>
</comment>
<comment type="caution">
    <text evidence="6">It is uncertain whether Met-1 or Met-12 is the initiator.</text>
</comment>
<comment type="sequence caution" evidence="6">
    <conflict type="erroneous initiation">
        <sequence resource="EMBL-CDS" id="BAB33003"/>
    </conflict>
    <text>Truncated N-terminus.</text>
</comment>
<dbReference type="EMBL" id="AP003105">
    <property type="protein sequence ID" value="BAB33003.1"/>
    <property type="status" value="ALT_INIT"/>
    <property type="molecule type" value="Genomic_DNA"/>
</dbReference>
<dbReference type="EMBL" id="AP008207">
    <property type="protein sequence ID" value="BAF04244.1"/>
    <property type="molecule type" value="Genomic_DNA"/>
</dbReference>
<dbReference type="EMBL" id="AP014957">
    <property type="protein sequence ID" value="BAS70923.1"/>
    <property type="molecule type" value="Genomic_DNA"/>
</dbReference>
<dbReference type="EMBL" id="AK067471">
    <property type="status" value="NOT_ANNOTATED_CDS"/>
    <property type="molecule type" value="mRNA"/>
</dbReference>
<dbReference type="RefSeq" id="XP_015622415.1">
    <property type="nucleotide sequence ID" value="XM_015766929.1"/>
</dbReference>
<dbReference type="SMR" id="Q0JPT4"/>
<dbReference type="FunCoup" id="Q0JPT4">
    <property type="interactions" value="1909"/>
</dbReference>
<dbReference type="STRING" id="39947.Q0JPT4"/>
<dbReference type="iPTMnet" id="Q0JPT4"/>
<dbReference type="PaxDb" id="39947-Q0JPT4"/>
<dbReference type="EnsemblPlants" id="Os01t0203000-01">
    <property type="protein sequence ID" value="Os01t0203000-01"/>
    <property type="gene ID" value="Os01g0203000"/>
</dbReference>
<dbReference type="Gramene" id="Os01t0203000-01">
    <property type="protein sequence ID" value="Os01t0203000-01"/>
    <property type="gene ID" value="Os01g0203000"/>
</dbReference>
<dbReference type="KEGG" id="dosa:Os01g0203000"/>
<dbReference type="eggNOG" id="ENOG502QQEG">
    <property type="taxonomic scope" value="Eukaryota"/>
</dbReference>
<dbReference type="HOGENOM" id="CLU_036256_0_0_1"/>
<dbReference type="InParanoid" id="Q0JPT4"/>
<dbReference type="OMA" id="MIHEECA"/>
<dbReference type="OrthoDB" id="667790at2759"/>
<dbReference type="PlantReactome" id="R-OSA-5632095">
    <property type="pathway name" value="Brassinosteroid signaling"/>
</dbReference>
<dbReference type="PlantReactome" id="R-OSA-5679411">
    <property type="pathway name" value="Gibberellin signaling"/>
</dbReference>
<dbReference type="Proteomes" id="UP000000763">
    <property type="component" value="Chromosome 1"/>
</dbReference>
<dbReference type="Proteomes" id="UP000059680">
    <property type="component" value="Chromosome 1"/>
</dbReference>
<dbReference type="GO" id="GO:0003677">
    <property type="term" value="F:DNA binding"/>
    <property type="evidence" value="ECO:0007669"/>
    <property type="project" value="UniProtKB-KW"/>
</dbReference>
<dbReference type="GO" id="GO:0003700">
    <property type="term" value="F:DNA-binding transcription factor activity"/>
    <property type="evidence" value="ECO:0007669"/>
    <property type="project" value="InterPro"/>
</dbReference>
<dbReference type="GO" id="GO:0009742">
    <property type="term" value="P:brassinosteroid mediated signaling pathway"/>
    <property type="evidence" value="ECO:0007669"/>
    <property type="project" value="UniProtKB-KW"/>
</dbReference>
<dbReference type="GO" id="GO:0006351">
    <property type="term" value="P:DNA-templated transcription"/>
    <property type="evidence" value="ECO:0007669"/>
    <property type="project" value="InterPro"/>
</dbReference>
<dbReference type="InterPro" id="IPR008540">
    <property type="entry name" value="BES1_N"/>
</dbReference>
<dbReference type="InterPro" id="IPR033264">
    <property type="entry name" value="BZR"/>
</dbReference>
<dbReference type="PANTHER" id="PTHR31506">
    <property type="entry name" value="BES1/BZR1 HOMOLOG PROTEIN 3-RELATED"/>
    <property type="match status" value="1"/>
</dbReference>
<dbReference type="PANTHER" id="PTHR31506:SF30">
    <property type="entry name" value="PROTEIN BZR1 HOMOLOG 2"/>
    <property type="match status" value="1"/>
</dbReference>
<dbReference type="Pfam" id="PF05687">
    <property type="entry name" value="BES1_N"/>
    <property type="match status" value="1"/>
</dbReference>
<name>BZR2_ORYSJ</name>
<protein>
    <recommendedName>
        <fullName evidence="5">Protein BZR1 homolog 2</fullName>
        <shortName evidence="5">OsBZR2</shortName>
    </recommendedName>
    <alternativeName>
        <fullName evidence="6">Protein BRASSINAZOLE-RESISTANT 1 homolog 2</fullName>
    </alternativeName>
</protein>
<reference key="1">
    <citation type="journal article" date="2002" name="Nature">
        <title>The genome sequence and structure of rice chromosome 1.</title>
        <authorList>
            <person name="Sasaki T."/>
            <person name="Matsumoto T."/>
            <person name="Yamamoto K."/>
            <person name="Sakata K."/>
            <person name="Baba T."/>
            <person name="Katayose Y."/>
            <person name="Wu J."/>
            <person name="Niimura Y."/>
            <person name="Cheng Z."/>
            <person name="Nagamura Y."/>
            <person name="Antonio B.A."/>
            <person name="Kanamori H."/>
            <person name="Hosokawa S."/>
            <person name="Masukawa M."/>
            <person name="Arikawa K."/>
            <person name="Chiden Y."/>
            <person name="Hayashi M."/>
            <person name="Okamoto M."/>
            <person name="Ando T."/>
            <person name="Aoki H."/>
            <person name="Arita K."/>
            <person name="Hamada M."/>
            <person name="Harada C."/>
            <person name="Hijishita S."/>
            <person name="Honda M."/>
            <person name="Ichikawa Y."/>
            <person name="Idonuma A."/>
            <person name="Iijima M."/>
            <person name="Ikeda M."/>
            <person name="Ikeno M."/>
            <person name="Ito S."/>
            <person name="Ito T."/>
            <person name="Ito Y."/>
            <person name="Ito Y."/>
            <person name="Iwabuchi A."/>
            <person name="Kamiya K."/>
            <person name="Karasawa W."/>
            <person name="Katagiri S."/>
            <person name="Kikuta A."/>
            <person name="Kobayashi N."/>
            <person name="Kono I."/>
            <person name="Machita K."/>
            <person name="Maehara T."/>
            <person name="Mizuno H."/>
            <person name="Mizubayashi T."/>
            <person name="Mukai Y."/>
            <person name="Nagasaki H."/>
            <person name="Nakashima M."/>
            <person name="Nakama Y."/>
            <person name="Nakamichi Y."/>
            <person name="Nakamura M."/>
            <person name="Namiki N."/>
            <person name="Negishi M."/>
            <person name="Ohta I."/>
            <person name="Ono N."/>
            <person name="Saji S."/>
            <person name="Sakai K."/>
            <person name="Shibata M."/>
            <person name="Shimokawa T."/>
            <person name="Shomura A."/>
            <person name="Song J."/>
            <person name="Takazaki Y."/>
            <person name="Terasawa K."/>
            <person name="Tsuji K."/>
            <person name="Waki K."/>
            <person name="Yamagata H."/>
            <person name="Yamane H."/>
            <person name="Yoshiki S."/>
            <person name="Yoshihara R."/>
            <person name="Yukawa K."/>
            <person name="Zhong H."/>
            <person name="Iwama H."/>
            <person name="Endo T."/>
            <person name="Ito H."/>
            <person name="Hahn J.H."/>
            <person name="Kim H.-I."/>
            <person name="Eun M.-Y."/>
            <person name="Yano M."/>
            <person name="Jiang J."/>
            <person name="Gojobori T."/>
        </authorList>
    </citation>
    <scope>NUCLEOTIDE SEQUENCE [LARGE SCALE GENOMIC DNA]</scope>
    <source>
        <strain>cv. Nipponbare</strain>
    </source>
</reference>
<reference key="2">
    <citation type="journal article" date="2005" name="Nature">
        <title>The map-based sequence of the rice genome.</title>
        <authorList>
            <consortium name="International rice genome sequencing project (IRGSP)"/>
        </authorList>
    </citation>
    <scope>NUCLEOTIDE SEQUENCE [LARGE SCALE GENOMIC DNA]</scope>
    <source>
        <strain>cv. Nipponbare</strain>
    </source>
</reference>
<reference key="3">
    <citation type="journal article" date="2008" name="Nucleic Acids Res.">
        <title>The rice annotation project database (RAP-DB): 2008 update.</title>
        <authorList>
            <consortium name="The rice annotation project (RAP)"/>
        </authorList>
    </citation>
    <scope>GENOME REANNOTATION</scope>
    <source>
        <strain>cv. Nipponbare</strain>
    </source>
</reference>
<reference key="4">
    <citation type="journal article" date="2013" name="Rice">
        <title>Improvement of the Oryza sativa Nipponbare reference genome using next generation sequence and optical map data.</title>
        <authorList>
            <person name="Kawahara Y."/>
            <person name="de la Bastide M."/>
            <person name="Hamilton J.P."/>
            <person name="Kanamori H."/>
            <person name="McCombie W.R."/>
            <person name="Ouyang S."/>
            <person name="Schwartz D.C."/>
            <person name="Tanaka T."/>
            <person name="Wu J."/>
            <person name="Zhou S."/>
            <person name="Childs K.L."/>
            <person name="Davidson R.M."/>
            <person name="Lin H."/>
            <person name="Quesada-Ocampo L."/>
            <person name="Vaillancourt B."/>
            <person name="Sakai H."/>
            <person name="Lee S.S."/>
            <person name="Kim J."/>
            <person name="Numa H."/>
            <person name="Itoh T."/>
            <person name="Buell C.R."/>
            <person name="Matsumoto T."/>
        </authorList>
    </citation>
    <scope>GENOME REANNOTATION</scope>
    <source>
        <strain>cv. Nipponbare</strain>
    </source>
</reference>
<reference key="5">
    <citation type="journal article" date="2003" name="Science">
        <title>Collection, mapping, and annotation of over 28,000 cDNA clones from japonica rice.</title>
        <authorList>
            <consortium name="The rice full-length cDNA consortium"/>
        </authorList>
    </citation>
    <scope>NUCLEOTIDE SEQUENCE [LARGE SCALE MRNA]</scope>
    <source>
        <strain>cv. Nipponbare</strain>
    </source>
</reference>
<reference key="6">
    <citation type="journal article" date="2019" name="Plant J.">
        <title>OsBZR1 turnover mediated by OsSK22-regulated U-box E3 ligase OsPUB24 in rice BR response.</title>
        <authorList>
            <person name="Min H.J."/>
            <person name="Cui L.H."/>
            <person name="Oh T.R."/>
            <person name="Kim J.H."/>
            <person name="Kim T.W."/>
            <person name="Kim W.T."/>
        </authorList>
    </citation>
    <scope>INTERACTION WITH PUB24</scope>
</reference>